<evidence type="ECO:0000250" key="1"/>
<evidence type="ECO:0000255" key="2">
    <source>
        <dbReference type="HAMAP-Rule" id="MF_00614"/>
    </source>
</evidence>
<name>FEN_METTH</name>
<feature type="chain" id="PRO_0000154056" description="Flap endonuclease 1">
    <location>
        <begin position="1"/>
        <end position="328"/>
    </location>
</feature>
<feature type="region of interest" description="N-domain">
    <location>
        <begin position="1"/>
        <end position="98"/>
    </location>
</feature>
<feature type="region of interest" description="I-domain">
    <location>
        <begin position="116"/>
        <end position="247"/>
    </location>
</feature>
<feature type="region of interest" description="Interaction with PCNA" evidence="2">
    <location>
        <begin position="320"/>
        <end position="328"/>
    </location>
</feature>
<feature type="binding site" evidence="2">
    <location>
        <position position="27"/>
    </location>
    <ligand>
        <name>Mg(2+)</name>
        <dbReference type="ChEBI" id="CHEBI:18420"/>
        <label>1</label>
    </ligand>
</feature>
<feature type="binding site" evidence="2">
    <location>
        <position position="80"/>
    </location>
    <ligand>
        <name>Mg(2+)</name>
        <dbReference type="ChEBI" id="CHEBI:18420"/>
        <label>1</label>
    </ligand>
</feature>
<feature type="binding site" evidence="2">
    <location>
        <position position="152"/>
    </location>
    <ligand>
        <name>Mg(2+)</name>
        <dbReference type="ChEBI" id="CHEBI:18420"/>
        <label>1</label>
    </ligand>
</feature>
<feature type="binding site" evidence="2">
    <location>
        <position position="154"/>
    </location>
    <ligand>
        <name>Mg(2+)</name>
        <dbReference type="ChEBI" id="CHEBI:18420"/>
        <label>1</label>
    </ligand>
</feature>
<feature type="binding site" evidence="2">
    <location>
        <position position="173"/>
    </location>
    <ligand>
        <name>Mg(2+)</name>
        <dbReference type="ChEBI" id="CHEBI:18420"/>
        <label>2</label>
    </ligand>
</feature>
<feature type="binding site" evidence="2">
    <location>
        <position position="175"/>
    </location>
    <ligand>
        <name>Mg(2+)</name>
        <dbReference type="ChEBI" id="CHEBI:18420"/>
        <label>2</label>
    </ligand>
</feature>
<feature type="binding site" evidence="2">
    <location>
        <position position="226"/>
    </location>
    <ligand>
        <name>Mg(2+)</name>
        <dbReference type="ChEBI" id="CHEBI:18420"/>
        <label>2</label>
    </ligand>
</feature>
<accession>O27670</accession>
<comment type="function">
    <text evidence="1">Structure-specific nuclease with 5'-flap endonuclease and 5'-3' exonuclease activities involved in DNA replication and repair. During DNA replication, cleaves the 5'-overhanging flap structure that is generated by displacement synthesis when DNA polymerase encounters the 5'-end of a downstream Okazaki fragment. Binds the unpaired 3'-DNA end and kinks the DNA to facilitate 5' cleavage specificity. Cleaves one nucleotide into the double-stranded DNA from the junction in flap DNA, leaving a nick for ligation. Also involved in the base excision repair (BER) pathway. Acts as a genome stabilization factor that prevents flaps from equilibrating into structures that lead to duplications and deletions. Also possesses 5'-3' exonuclease activity on nicked or gapped double-stranded DNA (By similarity).</text>
</comment>
<comment type="cofactor">
    <cofactor evidence="2">
        <name>Mg(2+)</name>
        <dbReference type="ChEBI" id="CHEBI:18420"/>
    </cofactor>
    <text evidence="2">Binds 2 magnesium ions per subunit. They probably participate in the reaction catalyzed by the enzyme. May bind an additional third magnesium ion after substrate binding.</text>
</comment>
<comment type="subunit">
    <text evidence="2">Interacts with PCNA. PCNA stimulates the nuclease activity without altering cleavage specificity.</text>
</comment>
<comment type="similarity">
    <text evidence="2">Belongs to the XPG/RAD2 endonuclease family. FEN1 subfamily.</text>
</comment>
<reference key="1">
    <citation type="journal article" date="1997" name="J. Bacteriol.">
        <title>Complete genome sequence of Methanobacterium thermoautotrophicum deltaH: functional analysis and comparative genomics.</title>
        <authorList>
            <person name="Smith D.R."/>
            <person name="Doucette-Stamm L.A."/>
            <person name="Deloughery C."/>
            <person name="Lee H.-M."/>
            <person name="Dubois J."/>
            <person name="Aldredge T."/>
            <person name="Bashirzadeh R."/>
            <person name="Blakely D."/>
            <person name="Cook R."/>
            <person name="Gilbert K."/>
            <person name="Harrison D."/>
            <person name="Hoang L."/>
            <person name="Keagle P."/>
            <person name="Lumm W."/>
            <person name="Pothier B."/>
            <person name="Qiu D."/>
            <person name="Spadafora R."/>
            <person name="Vicare R."/>
            <person name="Wang Y."/>
            <person name="Wierzbowski J."/>
            <person name="Gibson R."/>
            <person name="Jiwani N."/>
            <person name="Caruso A."/>
            <person name="Bush D."/>
            <person name="Safer H."/>
            <person name="Patwell D."/>
            <person name="Prabhakar S."/>
            <person name="McDougall S."/>
            <person name="Shimer G."/>
            <person name="Goyal A."/>
            <person name="Pietrovski S."/>
            <person name="Church G.M."/>
            <person name="Daniels C.J."/>
            <person name="Mao J.-I."/>
            <person name="Rice P."/>
            <person name="Noelling J."/>
            <person name="Reeve J.N."/>
        </authorList>
    </citation>
    <scope>NUCLEOTIDE SEQUENCE [LARGE SCALE GENOMIC DNA]</scope>
    <source>
        <strain>ATCC 29096 / DSM 1053 / JCM 10044 / NBRC 100330 / Delta H</strain>
    </source>
</reference>
<keyword id="KW-0227">DNA damage</keyword>
<keyword id="KW-0234">DNA repair</keyword>
<keyword id="KW-0235">DNA replication</keyword>
<keyword id="KW-0255">Endonuclease</keyword>
<keyword id="KW-0269">Exonuclease</keyword>
<keyword id="KW-0378">Hydrolase</keyword>
<keyword id="KW-0460">Magnesium</keyword>
<keyword id="KW-0479">Metal-binding</keyword>
<keyword id="KW-0540">Nuclease</keyword>
<keyword id="KW-1185">Reference proteome</keyword>
<proteinExistence type="inferred from homology"/>
<sequence>MGVKLRDVVSPRRIRLEDLRGRTVAVDAANTLYQFLSSIRQRDGTPLMDSRGRVTSHLSGILYRTAAVMEREIRVIYVFDGRSHHLKGETVSRRADIRKKSEVEWKRALEEGDIDRAKKYAVRSSRMSSEILESSKRLLELLGIPYVQAPGEGEAQASYMVKMGDAWAVASQDYDCLLFGAPRVVRNLTLSGKLEDPEIIELESTLRELSISHTQLVDMALLVGTDFNEGVKGIGARRGLKLIREKGDIFKVIRDLEADIGGDPQVLRRIFLEPEVSEDYEIRWRKPDVEGVIEFLCTEHGFSEDRVRAALKKFEGASSTQKSLEDWF</sequence>
<gene>
    <name evidence="2" type="primary">fen</name>
    <name type="ordered locus">MTH_1633</name>
</gene>
<dbReference type="EC" id="3.1.-.-" evidence="2"/>
<dbReference type="EMBL" id="AE000666">
    <property type="protein sequence ID" value="AAB86106.1"/>
    <property type="molecule type" value="Genomic_DNA"/>
</dbReference>
<dbReference type="PIR" id="C69085">
    <property type="entry name" value="C69085"/>
</dbReference>
<dbReference type="RefSeq" id="WP_010877241.1">
    <property type="nucleotide sequence ID" value="NC_000916.1"/>
</dbReference>
<dbReference type="SMR" id="O27670"/>
<dbReference type="FunCoup" id="O27670">
    <property type="interactions" value="158"/>
</dbReference>
<dbReference type="STRING" id="187420.MTH_1633"/>
<dbReference type="PaxDb" id="187420-MTH_1633"/>
<dbReference type="EnsemblBacteria" id="AAB86106">
    <property type="protein sequence ID" value="AAB86106"/>
    <property type="gene ID" value="MTH_1633"/>
</dbReference>
<dbReference type="GeneID" id="1470718"/>
<dbReference type="KEGG" id="mth:MTH_1633"/>
<dbReference type="PATRIC" id="fig|187420.15.peg.1597"/>
<dbReference type="HOGENOM" id="CLU_032444_0_0_2"/>
<dbReference type="InParanoid" id="O27670"/>
<dbReference type="Proteomes" id="UP000005223">
    <property type="component" value="Chromosome"/>
</dbReference>
<dbReference type="GO" id="GO:0008409">
    <property type="term" value="F:5'-3' exonuclease activity"/>
    <property type="evidence" value="ECO:0007669"/>
    <property type="project" value="UniProtKB-UniRule"/>
</dbReference>
<dbReference type="GO" id="GO:0017108">
    <property type="term" value="F:5'-flap endonuclease activity"/>
    <property type="evidence" value="ECO:0007669"/>
    <property type="project" value="UniProtKB-UniRule"/>
</dbReference>
<dbReference type="GO" id="GO:0003677">
    <property type="term" value="F:DNA binding"/>
    <property type="evidence" value="ECO:0007669"/>
    <property type="project" value="UniProtKB-UniRule"/>
</dbReference>
<dbReference type="GO" id="GO:0000287">
    <property type="term" value="F:magnesium ion binding"/>
    <property type="evidence" value="ECO:0007669"/>
    <property type="project" value="UniProtKB-UniRule"/>
</dbReference>
<dbReference type="GO" id="GO:0006281">
    <property type="term" value="P:DNA repair"/>
    <property type="evidence" value="ECO:0007669"/>
    <property type="project" value="UniProtKB-UniRule"/>
</dbReference>
<dbReference type="GO" id="GO:0043137">
    <property type="term" value="P:DNA replication, removal of RNA primer"/>
    <property type="evidence" value="ECO:0007669"/>
    <property type="project" value="UniProtKB-UniRule"/>
</dbReference>
<dbReference type="CDD" id="cd09903">
    <property type="entry name" value="H3TH_FEN1-Arc"/>
    <property type="match status" value="1"/>
</dbReference>
<dbReference type="CDD" id="cd09867">
    <property type="entry name" value="PIN_FEN1"/>
    <property type="match status" value="1"/>
</dbReference>
<dbReference type="FunFam" id="3.40.50.1010:FF:000016">
    <property type="entry name" value="Flap endonuclease 1"/>
    <property type="match status" value="1"/>
</dbReference>
<dbReference type="Gene3D" id="1.10.150.20">
    <property type="entry name" value="5' to 3' exonuclease, C-terminal subdomain"/>
    <property type="match status" value="1"/>
</dbReference>
<dbReference type="Gene3D" id="3.40.50.1010">
    <property type="entry name" value="5'-nuclease"/>
    <property type="match status" value="1"/>
</dbReference>
<dbReference type="HAMAP" id="MF_00614">
    <property type="entry name" value="Fen"/>
    <property type="match status" value="1"/>
</dbReference>
<dbReference type="InterPro" id="IPR036279">
    <property type="entry name" value="5-3_exonuclease_C_sf"/>
</dbReference>
<dbReference type="InterPro" id="IPR023426">
    <property type="entry name" value="Flap_endonuc"/>
</dbReference>
<dbReference type="InterPro" id="IPR019973">
    <property type="entry name" value="Flap_endonuc_arc"/>
</dbReference>
<dbReference type="InterPro" id="IPR008918">
    <property type="entry name" value="HhH2"/>
</dbReference>
<dbReference type="InterPro" id="IPR029060">
    <property type="entry name" value="PIN-like_dom_sf"/>
</dbReference>
<dbReference type="InterPro" id="IPR006086">
    <property type="entry name" value="XPG-I_dom"/>
</dbReference>
<dbReference type="InterPro" id="IPR006084">
    <property type="entry name" value="XPG/Rad2"/>
</dbReference>
<dbReference type="InterPro" id="IPR019974">
    <property type="entry name" value="XPG_CS"/>
</dbReference>
<dbReference type="InterPro" id="IPR006085">
    <property type="entry name" value="XPG_DNA_repair_N"/>
</dbReference>
<dbReference type="NCBIfam" id="TIGR03674">
    <property type="entry name" value="fen_arch"/>
    <property type="match status" value="1"/>
</dbReference>
<dbReference type="PANTHER" id="PTHR11081:SF9">
    <property type="entry name" value="FLAP ENDONUCLEASE 1"/>
    <property type="match status" value="1"/>
</dbReference>
<dbReference type="PANTHER" id="PTHR11081">
    <property type="entry name" value="FLAP ENDONUCLEASE FAMILY MEMBER"/>
    <property type="match status" value="1"/>
</dbReference>
<dbReference type="Pfam" id="PF00867">
    <property type="entry name" value="XPG_I"/>
    <property type="match status" value="1"/>
</dbReference>
<dbReference type="Pfam" id="PF00752">
    <property type="entry name" value="XPG_N"/>
    <property type="match status" value="1"/>
</dbReference>
<dbReference type="PRINTS" id="PR00853">
    <property type="entry name" value="XPGRADSUPER"/>
</dbReference>
<dbReference type="SMART" id="SM00279">
    <property type="entry name" value="HhH2"/>
    <property type="match status" value="1"/>
</dbReference>
<dbReference type="SMART" id="SM00484">
    <property type="entry name" value="XPGI"/>
    <property type="match status" value="1"/>
</dbReference>
<dbReference type="SMART" id="SM00485">
    <property type="entry name" value="XPGN"/>
    <property type="match status" value="1"/>
</dbReference>
<dbReference type="SUPFAM" id="SSF47807">
    <property type="entry name" value="5' to 3' exonuclease, C-terminal subdomain"/>
    <property type="match status" value="1"/>
</dbReference>
<dbReference type="SUPFAM" id="SSF88723">
    <property type="entry name" value="PIN domain-like"/>
    <property type="match status" value="1"/>
</dbReference>
<dbReference type="PROSITE" id="PS00841">
    <property type="entry name" value="XPG_1"/>
    <property type="match status" value="1"/>
</dbReference>
<organism>
    <name type="scientific">Methanothermobacter thermautotrophicus (strain ATCC 29096 / DSM 1053 / JCM 10044 / NBRC 100330 / Delta H)</name>
    <name type="common">Methanobacterium thermoautotrophicum</name>
    <dbReference type="NCBI Taxonomy" id="187420"/>
    <lineage>
        <taxon>Archaea</taxon>
        <taxon>Methanobacteriati</taxon>
        <taxon>Methanobacteriota</taxon>
        <taxon>Methanomada group</taxon>
        <taxon>Methanobacteria</taxon>
        <taxon>Methanobacteriales</taxon>
        <taxon>Methanobacteriaceae</taxon>
        <taxon>Methanothermobacter</taxon>
    </lineage>
</organism>
<protein>
    <recommendedName>
        <fullName evidence="2">Flap endonuclease 1</fullName>
        <shortName evidence="2">FEN-1</shortName>
        <ecNumber evidence="2">3.1.-.-</ecNumber>
    </recommendedName>
    <alternativeName>
        <fullName evidence="2">Flap structure-specific endonuclease 1</fullName>
    </alternativeName>
</protein>